<dbReference type="EC" id="2.8.1.10" evidence="1"/>
<dbReference type="EMBL" id="CP000753">
    <property type="protein sequence ID" value="ABS08457.1"/>
    <property type="molecule type" value="Genomic_DNA"/>
</dbReference>
<dbReference type="RefSeq" id="WP_012089303.1">
    <property type="nucleotide sequence ID" value="NC_009665.1"/>
</dbReference>
<dbReference type="SMR" id="A6WNR8"/>
<dbReference type="KEGG" id="sbm:Shew185_2319"/>
<dbReference type="HOGENOM" id="CLU_062233_1_0_6"/>
<dbReference type="UniPathway" id="UPA00060"/>
<dbReference type="GO" id="GO:0005737">
    <property type="term" value="C:cytoplasm"/>
    <property type="evidence" value="ECO:0007669"/>
    <property type="project" value="UniProtKB-SubCell"/>
</dbReference>
<dbReference type="GO" id="GO:1990107">
    <property type="term" value="F:thiazole synthase activity"/>
    <property type="evidence" value="ECO:0007669"/>
    <property type="project" value="UniProtKB-EC"/>
</dbReference>
<dbReference type="GO" id="GO:0009229">
    <property type="term" value="P:thiamine diphosphate biosynthetic process"/>
    <property type="evidence" value="ECO:0007669"/>
    <property type="project" value="UniProtKB-UniRule"/>
</dbReference>
<dbReference type="CDD" id="cd04728">
    <property type="entry name" value="ThiG"/>
    <property type="match status" value="1"/>
</dbReference>
<dbReference type="FunFam" id="3.20.20.70:FF:000049">
    <property type="entry name" value="Thiazole synthase"/>
    <property type="match status" value="1"/>
</dbReference>
<dbReference type="Gene3D" id="3.20.20.70">
    <property type="entry name" value="Aldolase class I"/>
    <property type="match status" value="1"/>
</dbReference>
<dbReference type="HAMAP" id="MF_00443">
    <property type="entry name" value="ThiG"/>
    <property type="match status" value="1"/>
</dbReference>
<dbReference type="InterPro" id="IPR013785">
    <property type="entry name" value="Aldolase_TIM"/>
</dbReference>
<dbReference type="InterPro" id="IPR033983">
    <property type="entry name" value="Thiazole_synthase_ThiG"/>
</dbReference>
<dbReference type="InterPro" id="IPR008867">
    <property type="entry name" value="ThiG"/>
</dbReference>
<dbReference type="PANTHER" id="PTHR34266">
    <property type="entry name" value="THIAZOLE SYNTHASE"/>
    <property type="match status" value="1"/>
</dbReference>
<dbReference type="PANTHER" id="PTHR34266:SF2">
    <property type="entry name" value="THIAZOLE SYNTHASE"/>
    <property type="match status" value="1"/>
</dbReference>
<dbReference type="Pfam" id="PF05690">
    <property type="entry name" value="ThiG"/>
    <property type="match status" value="1"/>
</dbReference>
<dbReference type="SUPFAM" id="SSF110399">
    <property type="entry name" value="ThiG-like"/>
    <property type="match status" value="1"/>
</dbReference>
<proteinExistence type="inferred from homology"/>
<comment type="function">
    <text evidence="1">Catalyzes the rearrangement of 1-deoxy-D-xylulose 5-phosphate (DXP) to produce the thiazole phosphate moiety of thiamine. Sulfur is provided by the thiocarboxylate moiety of the carrier protein ThiS. In vitro, sulfur can be provided by H(2)S.</text>
</comment>
<comment type="catalytic activity">
    <reaction evidence="1">
        <text>[ThiS sulfur-carrier protein]-C-terminal-Gly-aminoethanethioate + 2-iminoacetate + 1-deoxy-D-xylulose 5-phosphate = [ThiS sulfur-carrier protein]-C-terminal Gly-Gly + 2-[(2R,5Z)-2-carboxy-4-methylthiazol-5(2H)-ylidene]ethyl phosphate + 2 H2O + H(+)</text>
        <dbReference type="Rhea" id="RHEA:26297"/>
        <dbReference type="Rhea" id="RHEA-COMP:12909"/>
        <dbReference type="Rhea" id="RHEA-COMP:19908"/>
        <dbReference type="ChEBI" id="CHEBI:15377"/>
        <dbReference type="ChEBI" id="CHEBI:15378"/>
        <dbReference type="ChEBI" id="CHEBI:57792"/>
        <dbReference type="ChEBI" id="CHEBI:62899"/>
        <dbReference type="ChEBI" id="CHEBI:77846"/>
        <dbReference type="ChEBI" id="CHEBI:90778"/>
        <dbReference type="ChEBI" id="CHEBI:232372"/>
        <dbReference type="EC" id="2.8.1.10"/>
    </reaction>
</comment>
<comment type="pathway">
    <text evidence="1">Cofactor biosynthesis; thiamine diphosphate biosynthesis.</text>
</comment>
<comment type="subunit">
    <text evidence="1">Homotetramer. Forms heterodimers with either ThiH or ThiS.</text>
</comment>
<comment type="subcellular location">
    <subcellularLocation>
        <location evidence="1">Cytoplasm</location>
    </subcellularLocation>
</comment>
<comment type="similarity">
    <text evidence="1">Belongs to the ThiG family.</text>
</comment>
<name>THIG_SHEB8</name>
<protein>
    <recommendedName>
        <fullName evidence="1">Thiazole synthase</fullName>
        <ecNumber evidence="1">2.8.1.10</ecNumber>
    </recommendedName>
</protein>
<reference key="1">
    <citation type="submission" date="2007-07" db="EMBL/GenBank/DDBJ databases">
        <title>Complete sequence of chromosome of Shewanella baltica OS185.</title>
        <authorList>
            <consortium name="US DOE Joint Genome Institute"/>
            <person name="Copeland A."/>
            <person name="Lucas S."/>
            <person name="Lapidus A."/>
            <person name="Barry K."/>
            <person name="Glavina del Rio T."/>
            <person name="Dalin E."/>
            <person name="Tice H."/>
            <person name="Pitluck S."/>
            <person name="Sims D."/>
            <person name="Brettin T."/>
            <person name="Bruce D."/>
            <person name="Detter J.C."/>
            <person name="Han C."/>
            <person name="Schmutz J."/>
            <person name="Larimer F."/>
            <person name="Land M."/>
            <person name="Hauser L."/>
            <person name="Kyrpides N."/>
            <person name="Mikhailova N."/>
            <person name="Brettar I."/>
            <person name="Rodrigues J."/>
            <person name="Konstantinidis K."/>
            <person name="Tiedje J."/>
            <person name="Richardson P."/>
        </authorList>
    </citation>
    <scope>NUCLEOTIDE SEQUENCE [LARGE SCALE GENOMIC DNA]</scope>
    <source>
        <strain>OS185</strain>
    </source>
</reference>
<accession>A6WNR8</accession>
<keyword id="KW-0963">Cytoplasm</keyword>
<keyword id="KW-0704">Schiff base</keyword>
<keyword id="KW-0784">Thiamine biosynthesis</keyword>
<keyword id="KW-0808">Transferase</keyword>
<evidence type="ECO:0000255" key="1">
    <source>
        <dbReference type="HAMAP-Rule" id="MF_00443"/>
    </source>
</evidence>
<gene>
    <name evidence="1" type="primary">thiG</name>
    <name type="ordered locus">Shew185_2319</name>
</gene>
<sequence length="254" mass="27202">MLTIADVEFESRLFTGTGKFSNSQVMLEAITASKSQLVTVAMKRIDFKMGLDDLLTPLRQAGVRLLPNTSGARNAKEAVFAAELAREMLGTHWIKLEIHPDPKYLMPDAIETLEAARILCEKGFIVLPYVHADPVLCRRLEEVGCAAVMPLASPIGSNQGLVTESFLKIIIEQARVPVVIDAGIGAPSQAARAMELGADAVLVNTAIASSASPIVMAECFKEAVQCGRRAFEAGLGRVQTGAVHTSPLTGFLNQ</sequence>
<feature type="chain" id="PRO_1000026041" description="Thiazole synthase">
    <location>
        <begin position="1"/>
        <end position="254"/>
    </location>
</feature>
<feature type="active site" description="Schiff-base intermediate with DXP" evidence="1">
    <location>
        <position position="95"/>
    </location>
</feature>
<feature type="binding site" evidence="1">
    <location>
        <position position="156"/>
    </location>
    <ligand>
        <name>1-deoxy-D-xylulose 5-phosphate</name>
        <dbReference type="ChEBI" id="CHEBI:57792"/>
    </ligand>
</feature>
<feature type="binding site" evidence="1">
    <location>
        <begin position="182"/>
        <end position="183"/>
    </location>
    <ligand>
        <name>1-deoxy-D-xylulose 5-phosphate</name>
        <dbReference type="ChEBI" id="CHEBI:57792"/>
    </ligand>
</feature>
<feature type="binding site" evidence="1">
    <location>
        <begin position="204"/>
        <end position="205"/>
    </location>
    <ligand>
        <name>1-deoxy-D-xylulose 5-phosphate</name>
        <dbReference type="ChEBI" id="CHEBI:57792"/>
    </ligand>
</feature>
<organism>
    <name type="scientific">Shewanella baltica (strain OS185)</name>
    <dbReference type="NCBI Taxonomy" id="402882"/>
    <lineage>
        <taxon>Bacteria</taxon>
        <taxon>Pseudomonadati</taxon>
        <taxon>Pseudomonadota</taxon>
        <taxon>Gammaproteobacteria</taxon>
        <taxon>Alteromonadales</taxon>
        <taxon>Shewanellaceae</taxon>
        <taxon>Shewanella</taxon>
    </lineage>
</organism>